<gene>
    <name evidence="1" type="primary">moaC</name>
    <name type="ordered locus">ECH74115_0931</name>
</gene>
<keyword id="KW-0456">Lyase</keyword>
<keyword id="KW-0501">Molybdenum cofactor biosynthesis</keyword>
<reference key="1">
    <citation type="journal article" date="2011" name="Proc. Natl. Acad. Sci. U.S.A.">
        <title>Genomic anatomy of Escherichia coli O157:H7 outbreaks.</title>
        <authorList>
            <person name="Eppinger M."/>
            <person name="Mammel M.K."/>
            <person name="Leclerc J.E."/>
            <person name="Ravel J."/>
            <person name="Cebula T.A."/>
        </authorList>
    </citation>
    <scope>NUCLEOTIDE SEQUENCE [LARGE SCALE GENOMIC DNA]</scope>
    <source>
        <strain>EC4115 / EHEC</strain>
    </source>
</reference>
<protein>
    <recommendedName>
        <fullName evidence="1">Cyclic pyranopterin monophosphate synthase</fullName>
        <ecNumber evidence="1">4.6.1.17</ecNumber>
    </recommendedName>
    <alternativeName>
        <fullName evidence="1">Molybdenum cofactor biosynthesis protein C</fullName>
    </alternativeName>
</protein>
<dbReference type="EC" id="4.6.1.17" evidence="1"/>
<dbReference type="EMBL" id="CP001164">
    <property type="protein sequence ID" value="ACI34853.1"/>
    <property type="molecule type" value="Genomic_DNA"/>
</dbReference>
<dbReference type="RefSeq" id="WP_000080885.1">
    <property type="nucleotide sequence ID" value="NC_011353.1"/>
</dbReference>
<dbReference type="SMR" id="B5YRM2"/>
<dbReference type="GeneID" id="86945666"/>
<dbReference type="KEGG" id="ecf:ECH74115_0931"/>
<dbReference type="HOGENOM" id="CLU_074693_1_1_6"/>
<dbReference type="UniPathway" id="UPA00344"/>
<dbReference type="GO" id="GO:0061799">
    <property type="term" value="F:cyclic pyranopterin monophosphate synthase activity"/>
    <property type="evidence" value="ECO:0007669"/>
    <property type="project" value="UniProtKB-UniRule"/>
</dbReference>
<dbReference type="GO" id="GO:0006777">
    <property type="term" value="P:Mo-molybdopterin cofactor biosynthetic process"/>
    <property type="evidence" value="ECO:0007669"/>
    <property type="project" value="UniProtKB-UniRule"/>
</dbReference>
<dbReference type="CDD" id="cd01420">
    <property type="entry name" value="MoaC_PE"/>
    <property type="match status" value="1"/>
</dbReference>
<dbReference type="FunFam" id="3.30.70.640:FF:000001">
    <property type="entry name" value="Cyclic pyranopterin monophosphate synthase"/>
    <property type="match status" value="1"/>
</dbReference>
<dbReference type="Gene3D" id="3.30.70.640">
    <property type="entry name" value="Molybdopterin cofactor biosynthesis C (MoaC) domain"/>
    <property type="match status" value="1"/>
</dbReference>
<dbReference type="HAMAP" id="MF_01224_B">
    <property type="entry name" value="MoaC_B"/>
    <property type="match status" value="1"/>
</dbReference>
<dbReference type="InterPro" id="IPR023045">
    <property type="entry name" value="MoaC"/>
</dbReference>
<dbReference type="InterPro" id="IPR047594">
    <property type="entry name" value="MoaC_bact/euk"/>
</dbReference>
<dbReference type="InterPro" id="IPR036522">
    <property type="entry name" value="MoaC_sf"/>
</dbReference>
<dbReference type="InterPro" id="IPR050105">
    <property type="entry name" value="MoCo_biosynth_MoaA/MoaC"/>
</dbReference>
<dbReference type="InterPro" id="IPR002820">
    <property type="entry name" value="Mopterin_CF_biosynth-C_dom"/>
</dbReference>
<dbReference type="NCBIfam" id="TIGR00581">
    <property type="entry name" value="moaC"/>
    <property type="match status" value="1"/>
</dbReference>
<dbReference type="NCBIfam" id="NF006870">
    <property type="entry name" value="PRK09364.1"/>
    <property type="match status" value="1"/>
</dbReference>
<dbReference type="PANTHER" id="PTHR22960">
    <property type="entry name" value="MOLYBDOPTERIN COFACTOR SYNTHESIS PROTEIN A"/>
    <property type="match status" value="1"/>
</dbReference>
<dbReference type="Pfam" id="PF01967">
    <property type="entry name" value="MoaC"/>
    <property type="match status" value="1"/>
</dbReference>
<dbReference type="SUPFAM" id="SSF55040">
    <property type="entry name" value="Molybdenum cofactor biosynthesis protein C, MoaC"/>
    <property type="match status" value="1"/>
</dbReference>
<sequence length="161" mass="17467">MSQLTHINAAGEAHMVDVSAKAETVREARAEAFVTMRSETLAMIIDGRHHKGDVFATARIAGIQAAKRTWDLIPLCHPLMLSKVEVNLQAEPEHNRVRIETLCRLTGKTGVEMEALTAASVAALTIYDMCKAVQKDMVIGPVRLLAKSGGKSGDFKVEADD</sequence>
<organism>
    <name type="scientific">Escherichia coli O157:H7 (strain EC4115 / EHEC)</name>
    <dbReference type="NCBI Taxonomy" id="444450"/>
    <lineage>
        <taxon>Bacteria</taxon>
        <taxon>Pseudomonadati</taxon>
        <taxon>Pseudomonadota</taxon>
        <taxon>Gammaproteobacteria</taxon>
        <taxon>Enterobacterales</taxon>
        <taxon>Enterobacteriaceae</taxon>
        <taxon>Escherichia</taxon>
    </lineage>
</organism>
<comment type="function">
    <text evidence="1">Catalyzes the conversion of (8S)-3',8-cyclo-7,8-dihydroguanosine 5'-triphosphate to cyclic pyranopterin monophosphate (cPMP).</text>
</comment>
<comment type="catalytic activity">
    <reaction evidence="1">
        <text>(8S)-3',8-cyclo-7,8-dihydroguanosine 5'-triphosphate = cyclic pyranopterin phosphate + diphosphate</text>
        <dbReference type="Rhea" id="RHEA:49580"/>
        <dbReference type="ChEBI" id="CHEBI:33019"/>
        <dbReference type="ChEBI" id="CHEBI:59648"/>
        <dbReference type="ChEBI" id="CHEBI:131766"/>
        <dbReference type="EC" id="4.6.1.17"/>
    </reaction>
</comment>
<comment type="pathway">
    <text evidence="1">Cofactor biosynthesis; molybdopterin biosynthesis.</text>
</comment>
<comment type="subunit">
    <text evidence="1">Homohexamer; trimer of dimers.</text>
</comment>
<comment type="similarity">
    <text evidence="1">Belongs to the MoaC family.</text>
</comment>
<name>MOAC_ECO5E</name>
<accession>B5YRM2</accession>
<evidence type="ECO:0000255" key="1">
    <source>
        <dbReference type="HAMAP-Rule" id="MF_01224"/>
    </source>
</evidence>
<proteinExistence type="inferred from homology"/>
<feature type="chain" id="PRO_1000139261" description="Cyclic pyranopterin monophosphate synthase">
    <location>
        <begin position="1"/>
        <end position="161"/>
    </location>
</feature>
<feature type="active site" evidence="1">
    <location>
        <position position="128"/>
    </location>
</feature>
<feature type="binding site" evidence="1">
    <location>
        <begin position="75"/>
        <end position="77"/>
    </location>
    <ligand>
        <name>substrate</name>
    </ligand>
</feature>
<feature type="binding site" evidence="1">
    <location>
        <begin position="113"/>
        <end position="114"/>
    </location>
    <ligand>
        <name>substrate</name>
    </ligand>
</feature>